<name>RS13_SHOC1</name>
<feature type="chain" id="PRO_0000230468" description="Small ribosomal subunit protein uS13">
    <location>
        <begin position="1"/>
        <end position="121"/>
    </location>
</feature>
<feature type="region of interest" description="Disordered" evidence="2">
    <location>
        <begin position="92"/>
        <end position="121"/>
    </location>
</feature>
<feature type="compositionally biased region" description="Basic residues" evidence="2">
    <location>
        <begin position="106"/>
        <end position="121"/>
    </location>
</feature>
<protein>
    <recommendedName>
        <fullName evidence="1">Small ribosomal subunit protein uS13</fullName>
    </recommendedName>
    <alternativeName>
        <fullName evidence="3">30S ribosomal protein S13</fullName>
    </alternativeName>
</protein>
<proteinExistence type="inferred from homology"/>
<sequence>MARVAGVDIPRDKRVVISLTYVFGIGKSTAAKILETAGVDENTRVRDLTEEELGRIREAVEGYQVEGDLRREVSLNIKRLIEIGSYRGIRHRRGLPVRGQNSKNNARTRKGPKRTVANKKK</sequence>
<accession>Q5WLN7</accession>
<keyword id="KW-1185">Reference proteome</keyword>
<keyword id="KW-0687">Ribonucleoprotein</keyword>
<keyword id="KW-0689">Ribosomal protein</keyword>
<keyword id="KW-0694">RNA-binding</keyword>
<keyword id="KW-0699">rRNA-binding</keyword>
<keyword id="KW-0820">tRNA-binding</keyword>
<gene>
    <name evidence="1" type="primary">rpsM</name>
    <name type="ordered locus">ABC0175</name>
</gene>
<organism>
    <name type="scientific">Shouchella clausii (strain KSM-K16)</name>
    <name type="common">Alkalihalobacillus clausii</name>
    <dbReference type="NCBI Taxonomy" id="66692"/>
    <lineage>
        <taxon>Bacteria</taxon>
        <taxon>Bacillati</taxon>
        <taxon>Bacillota</taxon>
        <taxon>Bacilli</taxon>
        <taxon>Bacillales</taxon>
        <taxon>Bacillaceae</taxon>
        <taxon>Shouchella</taxon>
    </lineage>
</organism>
<reference key="1">
    <citation type="submission" date="2003-10" db="EMBL/GenBank/DDBJ databases">
        <title>The complete genome sequence of the alkaliphilic Bacillus clausii KSM-K16.</title>
        <authorList>
            <person name="Takaki Y."/>
            <person name="Kageyama Y."/>
            <person name="Shimamura S."/>
            <person name="Suzuki H."/>
            <person name="Nishi S."/>
            <person name="Hatada Y."/>
            <person name="Kawai S."/>
            <person name="Ito S."/>
            <person name="Horikoshi K."/>
        </authorList>
    </citation>
    <scope>NUCLEOTIDE SEQUENCE [LARGE SCALE GENOMIC DNA]</scope>
    <source>
        <strain>KSM-K16</strain>
    </source>
</reference>
<evidence type="ECO:0000255" key="1">
    <source>
        <dbReference type="HAMAP-Rule" id="MF_01315"/>
    </source>
</evidence>
<evidence type="ECO:0000256" key="2">
    <source>
        <dbReference type="SAM" id="MobiDB-lite"/>
    </source>
</evidence>
<evidence type="ECO:0000305" key="3"/>
<dbReference type="EMBL" id="AP006627">
    <property type="protein sequence ID" value="BAD62718.1"/>
    <property type="molecule type" value="Genomic_DNA"/>
</dbReference>
<dbReference type="RefSeq" id="WP_011245038.1">
    <property type="nucleotide sequence ID" value="NC_006582.1"/>
</dbReference>
<dbReference type="SMR" id="Q5WLN7"/>
<dbReference type="STRING" id="66692.ABC0175"/>
<dbReference type="GeneID" id="86924211"/>
<dbReference type="KEGG" id="bcl:ABC0175"/>
<dbReference type="eggNOG" id="COG0099">
    <property type="taxonomic scope" value="Bacteria"/>
</dbReference>
<dbReference type="HOGENOM" id="CLU_103849_1_1_9"/>
<dbReference type="OrthoDB" id="9803610at2"/>
<dbReference type="Proteomes" id="UP000001168">
    <property type="component" value="Chromosome"/>
</dbReference>
<dbReference type="GO" id="GO:0005829">
    <property type="term" value="C:cytosol"/>
    <property type="evidence" value="ECO:0007669"/>
    <property type="project" value="TreeGrafter"/>
</dbReference>
<dbReference type="GO" id="GO:0015935">
    <property type="term" value="C:small ribosomal subunit"/>
    <property type="evidence" value="ECO:0007669"/>
    <property type="project" value="TreeGrafter"/>
</dbReference>
<dbReference type="GO" id="GO:0019843">
    <property type="term" value="F:rRNA binding"/>
    <property type="evidence" value="ECO:0007669"/>
    <property type="project" value="UniProtKB-UniRule"/>
</dbReference>
<dbReference type="GO" id="GO:0003735">
    <property type="term" value="F:structural constituent of ribosome"/>
    <property type="evidence" value="ECO:0007669"/>
    <property type="project" value="InterPro"/>
</dbReference>
<dbReference type="GO" id="GO:0000049">
    <property type="term" value="F:tRNA binding"/>
    <property type="evidence" value="ECO:0007669"/>
    <property type="project" value="UniProtKB-UniRule"/>
</dbReference>
<dbReference type="GO" id="GO:0006412">
    <property type="term" value="P:translation"/>
    <property type="evidence" value="ECO:0007669"/>
    <property type="project" value="UniProtKB-UniRule"/>
</dbReference>
<dbReference type="FunFam" id="1.10.8.50:FF:000001">
    <property type="entry name" value="30S ribosomal protein S13"/>
    <property type="match status" value="1"/>
</dbReference>
<dbReference type="FunFam" id="4.10.910.10:FF:000001">
    <property type="entry name" value="30S ribosomal protein S13"/>
    <property type="match status" value="1"/>
</dbReference>
<dbReference type="Gene3D" id="1.10.8.50">
    <property type="match status" value="1"/>
</dbReference>
<dbReference type="Gene3D" id="4.10.910.10">
    <property type="entry name" value="30s ribosomal protein s13, domain 2"/>
    <property type="match status" value="1"/>
</dbReference>
<dbReference type="HAMAP" id="MF_01315">
    <property type="entry name" value="Ribosomal_uS13"/>
    <property type="match status" value="1"/>
</dbReference>
<dbReference type="InterPro" id="IPR027437">
    <property type="entry name" value="Rbsml_uS13_C"/>
</dbReference>
<dbReference type="InterPro" id="IPR001892">
    <property type="entry name" value="Ribosomal_uS13"/>
</dbReference>
<dbReference type="InterPro" id="IPR010979">
    <property type="entry name" value="Ribosomal_uS13-like_H2TH"/>
</dbReference>
<dbReference type="InterPro" id="IPR019980">
    <property type="entry name" value="Ribosomal_uS13_bac-type"/>
</dbReference>
<dbReference type="InterPro" id="IPR018269">
    <property type="entry name" value="Ribosomal_uS13_CS"/>
</dbReference>
<dbReference type="NCBIfam" id="TIGR03631">
    <property type="entry name" value="uS13_bact"/>
    <property type="match status" value="1"/>
</dbReference>
<dbReference type="PANTHER" id="PTHR10871">
    <property type="entry name" value="30S RIBOSOMAL PROTEIN S13/40S RIBOSOMAL PROTEIN S18"/>
    <property type="match status" value="1"/>
</dbReference>
<dbReference type="PANTHER" id="PTHR10871:SF1">
    <property type="entry name" value="SMALL RIBOSOMAL SUBUNIT PROTEIN US13M"/>
    <property type="match status" value="1"/>
</dbReference>
<dbReference type="Pfam" id="PF00416">
    <property type="entry name" value="Ribosomal_S13"/>
    <property type="match status" value="1"/>
</dbReference>
<dbReference type="PIRSF" id="PIRSF002134">
    <property type="entry name" value="Ribosomal_S13"/>
    <property type="match status" value="1"/>
</dbReference>
<dbReference type="SUPFAM" id="SSF46946">
    <property type="entry name" value="S13-like H2TH domain"/>
    <property type="match status" value="1"/>
</dbReference>
<dbReference type="PROSITE" id="PS00646">
    <property type="entry name" value="RIBOSOMAL_S13_1"/>
    <property type="match status" value="1"/>
</dbReference>
<dbReference type="PROSITE" id="PS50159">
    <property type="entry name" value="RIBOSOMAL_S13_2"/>
    <property type="match status" value="1"/>
</dbReference>
<comment type="function">
    <text evidence="1">Located at the top of the head of the 30S subunit, it contacts several helices of the 16S rRNA. In the 70S ribosome it contacts the 23S rRNA (bridge B1a) and protein L5 of the 50S subunit (bridge B1b), connecting the 2 subunits; these bridges are implicated in subunit movement. Contacts the tRNAs in the A and P-sites.</text>
</comment>
<comment type="subunit">
    <text evidence="1">Part of the 30S ribosomal subunit. Forms a loose heterodimer with protein S19. Forms two bridges to the 50S subunit in the 70S ribosome.</text>
</comment>
<comment type="similarity">
    <text evidence="1">Belongs to the universal ribosomal protein uS13 family.</text>
</comment>